<protein>
    <recommendedName>
        <fullName evidence="1">Chorismate synthase</fullName>
        <shortName evidence="1">CS</shortName>
        <ecNumber evidence="1">4.2.3.5</ecNumber>
    </recommendedName>
    <alternativeName>
        <fullName evidence="1">5-enolpyruvylshikimate-3-phosphate phospholyase</fullName>
    </alternativeName>
</protein>
<gene>
    <name evidence="1" type="primary">aroC</name>
    <name type="ordered locus">Ping_1018</name>
</gene>
<organism>
    <name type="scientific">Psychromonas ingrahamii (strain DSM 17664 / CCUG 51855 / 37)</name>
    <dbReference type="NCBI Taxonomy" id="357804"/>
    <lineage>
        <taxon>Bacteria</taxon>
        <taxon>Pseudomonadati</taxon>
        <taxon>Pseudomonadota</taxon>
        <taxon>Gammaproteobacteria</taxon>
        <taxon>Alteromonadales</taxon>
        <taxon>Psychromonadaceae</taxon>
        <taxon>Psychromonas</taxon>
    </lineage>
</organism>
<sequence length="362" mass="39144">MAGSSIGQLFKVTTFGESHGAAIGCIVDGIPPNLEICEADLQHDLDRRRPGQSRYTTMRQEKDQVKILSGVFEGKTTGSSIGLMIENTDQRSKDYSEIKDLFRPGHADYTYHQKFGHRDYRGGGRSSARETAMRVAAGAIAKKYLNEQFGIVIRGYLSQLGDIKADSIDLDEVENNPFFFPDLSKITQLEDYMKALIKEGNSVGAKVTVVASSVPVGLGEPVFDRLDAELAHSLMSINAVKGVEIGDGFAAVSQKGTEHRDEMTPGGFLSNHAGGILGGISTGQDIIAHIALKPTSSLTIPGRTITTNGEATTMITKGRHDPCVGIRAVPIAEAQMAITLLDHLLRHRAQNLHVTTNTPFIK</sequence>
<accession>A1STP2</accession>
<feature type="chain" id="PRO_1000022533" description="Chorismate synthase">
    <location>
        <begin position="1"/>
        <end position="362"/>
    </location>
</feature>
<feature type="binding site" evidence="1">
    <location>
        <position position="48"/>
    </location>
    <ligand>
        <name>NADP(+)</name>
        <dbReference type="ChEBI" id="CHEBI:58349"/>
    </ligand>
</feature>
<feature type="binding site" evidence="1">
    <location>
        <position position="54"/>
    </location>
    <ligand>
        <name>NADP(+)</name>
        <dbReference type="ChEBI" id="CHEBI:58349"/>
    </ligand>
</feature>
<feature type="binding site" evidence="1">
    <location>
        <begin position="125"/>
        <end position="127"/>
    </location>
    <ligand>
        <name>FMN</name>
        <dbReference type="ChEBI" id="CHEBI:58210"/>
    </ligand>
</feature>
<feature type="binding site" evidence="1">
    <location>
        <begin position="238"/>
        <end position="239"/>
    </location>
    <ligand>
        <name>FMN</name>
        <dbReference type="ChEBI" id="CHEBI:58210"/>
    </ligand>
</feature>
<feature type="binding site" evidence="1">
    <location>
        <position position="278"/>
    </location>
    <ligand>
        <name>FMN</name>
        <dbReference type="ChEBI" id="CHEBI:58210"/>
    </ligand>
</feature>
<feature type="binding site" evidence="1">
    <location>
        <begin position="293"/>
        <end position="297"/>
    </location>
    <ligand>
        <name>FMN</name>
        <dbReference type="ChEBI" id="CHEBI:58210"/>
    </ligand>
</feature>
<feature type="binding site" evidence="1">
    <location>
        <position position="319"/>
    </location>
    <ligand>
        <name>FMN</name>
        <dbReference type="ChEBI" id="CHEBI:58210"/>
    </ligand>
</feature>
<evidence type="ECO:0000255" key="1">
    <source>
        <dbReference type="HAMAP-Rule" id="MF_00300"/>
    </source>
</evidence>
<keyword id="KW-0028">Amino-acid biosynthesis</keyword>
<keyword id="KW-0057">Aromatic amino acid biosynthesis</keyword>
<keyword id="KW-0274">FAD</keyword>
<keyword id="KW-0285">Flavoprotein</keyword>
<keyword id="KW-0288">FMN</keyword>
<keyword id="KW-0456">Lyase</keyword>
<keyword id="KW-0521">NADP</keyword>
<keyword id="KW-1185">Reference proteome</keyword>
<reference key="1">
    <citation type="journal article" date="2008" name="BMC Genomics">
        <title>Genomics of an extreme psychrophile, Psychromonas ingrahamii.</title>
        <authorList>
            <person name="Riley M."/>
            <person name="Staley J.T."/>
            <person name="Danchin A."/>
            <person name="Wang T.Z."/>
            <person name="Brettin T.S."/>
            <person name="Hauser L.J."/>
            <person name="Land M.L."/>
            <person name="Thompson L.S."/>
        </authorList>
    </citation>
    <scope>NUCLEOTIDE SEQUENCE [LARGE SCALE GENOMIC DNA]</scope>
    <source>
        <strain>DSM 17664 / CCUG 51855 / 37</strain>
    </source>
</reference>
<dbReference type="EC" id="4.2.3.5" evidence="1"/>
<dbReference type="EMBL" id="CP000510">
    <property type="protein sequence ID" value="ABM02857.1"/>
    <property type="molecule type" value="Genomic_DNA"/>
</dbReference>
<dbReference type="RefSeq" id="WP_011769420.1">
    <property type="nucleotide sequence ID" value="NC_008709.1"/>
</dbReference>
<dbReference type="SMR" id="A1STP2"/>
<dbReference type="STRING" id="357804.Ping_1018"/>
<dbReference type="KEGG" id="pin:Ping_1018"/>
<dbReference type="eggNOG" id="COG0082">
    <property type="taxonomic scope" value="Bacteria"/>
</dbReference>
<dbReference type="HOGENOM" id="CLU_034547_0_2_6"/>
<dbReference type="OrthoDB" id="9771806at2"/>
<dbReference type="UniPathway" id="UPA00053">
    <property type="reaction ID" value="UER00090"/>
</dbReference>
<dbReference type="Proteomes" id="UP000000639">
    <property type="component" value="Chromosome"/>
</dbReference>
<dbReference type="GO" id="GO:0005829">
    <property type="term" value="C:cytosol"/>
    <property type="evidence" value="ECO:0007669"/>
    <property type="project" value="TreeGrafter"/>
</dbReference>
<dbReference type="GO" id="GO:0004107">
    <property type="term" value="F:chorismate synthase activity"/>
    <property type="evidence" value="ECO:0007669"/>
    <property type="project" value="UniProtKB-UniRule"/>
</dbReference>
<dbReference type="GO" id="GO:0010181">
    <property type="term" value="F:FMN binding"/>
    <property type="evidence" value="ECO:0007669"/>
    <property type="project" value="TreeGrafter"/>
</dbReference>
<dbReference type="GO" id="GO:0008652">
    <property type="term" value="P:amino acid biosynthetic process"/>
    <property type="evidence" value="ECO:0007669"/>
    <property type="project" value="UniProtKB-KW"/>
</dbReference>
<dbReference type="GO" id="GO:0009073">
    <property type="term" value="P:aromatic amino acid family biosynthetic process"/>
    <property type="evidence" value="ECO:0007669"/>
    <property type="project" value="UniProtKB-KW"/>
</dbReference>
<dbReference type="GO" id="GO:0009423">
    <property type="term" value="P:chorismate biosynthetic process"/>
    <property type="evidence" value="ECO:0007669"/>
    <property type="project" value="UniProtKB-UniRule"/>
</dbReference>
<dbReference type="CDD" id="cd07304">
    <property type="entry name" value="Chorismate_synthase"/>
    <property type="match status" value="1"/>
</dbReference>
<dbReference type="FunFam" id="3.60.150.10:FF:000001">
    <property type="entry name" value="Chorismate synthase"/>
    <property type="match status" value="1"/>
</dbReference>
<dbReference type="Gene3D" id="3.60.150.10">
    <property type="entry name" value="Chorismate synthase AroC"/>
    <property type="match status" value="1"/>
</dbReference>
<dbReference type="HAMAP" id="MF_00300">
    <property type="entry name" value="Chorismate_synth"/>
    <property type="match status" value="1"/>
</dbReference>
<dbReference type="InterPro" id="IPR000453">
    <property type="entry name" value="Chorismate_synth"/>
</dbReference>
<dbReference type="InterPro" id="IPR035904">
    <property type="entry name" value="Chorismate_synth_AroC_sf"/>
</dbReference>
<dbReference type="InterPro" id="IPR020541">
    <property type="entry name" value="Chorismate_synthase_CS"/>
</dbReference>
<dbReference type="NCBIfam" id="TIGR00033">
    <property type="entry name" value="aroC"/>
    <property type="match status" value="1"/>
</dbReference>
<dbReference type="NCBIfam" id="NF003793">
    <property type="entry name" value="PRK05382.1"/>
    <property type="match status" value="1"/>
</dbReference>
<dbReference type="PANTHER" id="PTHR21085">
    <property type="entry name" value="CHORISMATE SYNTHASE"/>
    <property type="match status" value="1"/>
</dbReference>
<dbReference type="PANTHER" id="PTHR21085:SF0">
    <property type="entry name" value="CHORISMATE SYNTHASE"/>
    <property type="match status" value="1"/>
</dbReference>
<dbReference type="Pfam" id="PF01264">
    <property type="entry name" value="Chorismate_synt"/>
    <property type="match status" value="1"/>
</dbReference>
<dbReference type="PIRSF" id="PIRSF001456">
    <property type="entry name" value="Chorismate_synth"/>
    <property type="match status" value="1"/>
</dbReference>
<dbReference type="SUPFAM" id="SSF103263">
    <property type="entry name" value="Chorismate synthase, AroC"/>
    <property type="match status" value="1"/>
</dbReference>
<dbReference type="PROSITE" id="PS00787">
    <property type="entry name" value="CHORISMATE_SYNTHASE_1"/>
    <property type="match status" value="1"/>
</dbReference>
<dbReference type="PROSITE" id="PS00788">
    <property type="entry name" value="CHORISMATE_SYNTHASE_2"/>
    <property type="match status" value="1"/>
</dbReference>
<name>AROC_PSYIN</name>
<proteinExistence type="inferred from homology"/>
<comment type="function">
    <text evidence="1">Catalyzes the anti-1,4-elimination of the C-3 phosphate and the C-6 proR hydrogen from 5-enolpyruvylshikimate-3-phosphate (EPSP) to yield chorismate, which is the branch point compound that serves as the starting substrate for the three terminal pathways of aromatic amino acid biosynthesis. This reaction introduces a second double bond into the aromatic ring system.</text>
</comment>
<comment type="catalytic activity">
    <reaction evidence="1">
        <text>5-O-(1-carboxyvinyl)-3-phosphoshikimate = chorismate + phosphate</text>
        <dbReference type="Rhea" id="RHEA:21020"/>
        <dbReference type="ChEBI" id="CHEBI:29748"/>
        <dbReference type="ChEBI" id="CHEBI:43474"/>
        <dbReference type="ChEBI" id="CHEBI:57701"/>
        <dbReference type="EC" id="4.2.3.5"/>
    </reaction>
</comment>
<comment type="cofactor">
    <cofactor evidence="1">
        <name>FMNH2</name>
        <dbReference type="ChEBI" id="CHEBI:57618"/>
    </cofactor>
    <text evidence="1">Reduced FMN (FMNH(2)).</text>
</comment>
<comment type="pathway">
    <text evidence="1">Metabolic intermediate biosynthesis; chorismate biosynthesis; chorismate from D-erythrose 4-phosphate and phosphoenolpyruvate: step 7/7.</text>
</comment>
<comment type="subunit">
    <text evidence="1">Homotetramer.</text>
</comment>
<comment type="similarity">
    <text evidence="1">Belongs to the chorismate synthase family.</text>
</comment>